<gene>
    <name type="primary">Tgt</name>
    <name type="ORF">CG4947</name>
</gene>
<protein>
    <recommendedName>
        <fullName evidence="1">Queuine tRNA-ribosyltransferase catalytic subunit</fullName>
        <ecNumber evidence="1">2.4.2.64</ecNumber>
    </recommendedName>
    <alternativeName>
        <fullName evidence="1">Guanine insertion enzyme</fullName>
    </alternativeName>
    <alternativeName>
        <fullName evidence="1">tRNA-guanine transglycosylase</fullName>
    </alternativeName>
</protein>
<organism>
    <name type="scientific">Drosophila melanogaster</name>
    <name type="common">Fruit fly</name>
    <dbReference type="NCBI Taxonomy" id="7227"/>
    <lineage>
        <taxon>Eukaryota</taxon>
        <taxon>Metazoa</taxon>
        <taxon>Ecdysozoa</taxon>
        <taxon>Arthropoda</taxon>
        <taxon>Hexapoda</taxon>
        <taxon>Insecta</taxon>
        <taxon>Pterygota</taxon>
        <taxon>Neoptera</taxon>
        <taxon>Endopterygota</taxon>
        <taxon>Diptera</taxon>
        <taxon>Brachycera</taxon>
        <taxon>Muscomorpha</taxon>
        <taxon>Ephydroidea</taxon>
        <taxon>Drosophilidae</taxon>
        <taxon>Drosophila</taxon>
        <taxon>Sophophora</taxon>
    </lineage>
</organism>
<sequence length="427" mass="47751">MGPSHIPPLTYKVVAECSVSKARAGLMTLRHSEVNTPVFMPVGTQGTLKGIVPDQLIELNCQILLGNTYHLGLRPGIETLKKAGGLHKFMGWPRAILTDSGGFQMVSLLQLAEIDEHGVNFRSPFDNSQCMLTPEHSIEIQNAIGGDIMMQLDDVVKTTTTGPRVEEAMERTIRWVDRCIEAHARDDDQSLFPIVQGGLDVPLRQRCVSALMERQVRGFAVGGLSGGESKHDFWRMVDVCTGYLPKDKPRYLMGVGFAADLVVCVALGIDMFDCVFPTRTARFGCALVDSGQLNLKQPKYKLDMEPIDKDCDCSTCRRYTRSYLHHIATNESVSSSLLSIHNVAYQLRLMRSMREAIQRDEFPQFVADFMARHFKAEPVPAWIREALSAVNIQLPADPERIDEQDQKPKTEKRRETEDVAEEQVASS</sequence>
<feature type="chain" id="PRO_0000135568" description="Queuine tRNA-ribosyltransferase catalytic subunit">
    <location>
        <begin position="1"/>
        <end position="427"/>
    </location>
</feature>
<feature type="region of interest" description="RNA binding" evidence="1">
    <location>
        <begin position="254"/>
        <end position="260"/>
    </location>
</feature>
<feature type="region of interest" description="RNA binding; important for wobble base 34 recognition" evidence="1">
    <location>
        <begin position="278"/>
        <end position="282"/>
    </location>
</feature>
<feature type="region of interest" description="Disordered" evidence="2">
    <location>
        <begin position="395"/>
        <end position="427"/>
    </location>
</feature>
<feature type="compositionally biased region" description="Basic and acidic residues" evidence="2">
    <location>
        <begin position="397"/>
        <end position="417"/>
    </location>
</feature>
<feature type="active site" description="Proton acceptor" evidence="1">
    <location>
        <position position="99"/>
    </location>
</feature>
<feature type="active site" description="Nucleophile" evidence="1">
    <location>
        <position position="273"/>
    </location>
</feature>
<feature type="binding site" evidence="1">
    <location>
        <begin position="99"/>
        <end position="103"/>
    </location>
    <ligand>
        <name>substrate</name>
    </ligand>
</feature>
<feature type="binding site" evidence="1">
    <location>
        <position position="153"/>
    </location>
    <ligand>
        <name>substrate</name>
    </ligand>
</feature>
<feature type="binding site" evidence="1">
    <location>
        <position position="196"/>
    </location>
    <ligand>
        <name>substrate</name>
    </ligand>
</feature>
<feature type="binding site" evidence="1">
    <location>
        <position position="223"/>
    </location>
    <ligand>
        <name>substrate</name>
    </ligand>
</feature>
<feature type="binding site" evidence="1">
    <location>
        <position position="311"/>
    </location>
    <ligand>
        <name>Zn(2+)</name>
        <dbReference type="ChEBI" id="CHEBI:29105"/>
    </ligand>
</feature>
<feature type="binding site" evidence="1">
    <location>
        <position position="313"/>
    </location>
    <ligand>
        <name>Zn(2+)</name>
        <dbReference type="ChEBI" id="CHEBI:29105"/>
    </ligand>
</feature>
<feature type="binding site" evidence="1">
    <location>
        <position position="316"/>
    </location>
    <ligand>
        <name>Zn(2+)</name>
        <dbReference type="ChEBI" id="CHEBI:29105"/>
    </ligand>
</feature>
<feature type="binding site" evidence="1">
    <location>
        <position position="341"/>
    </location>
    <ligand>
        <name>Zn(2+)</name>
        <dbReference type="ChEBI" id="CHEBI:29105"/>
    </ligand>
</feature>
<evidence type="ECO:0000255" key="1">
    <source>
        <dbReference type="HAMAP-Rule" id="MF_03218"/>
    </source>
</evidence>
<evidence type="ECO:0000256" key="2">
    <source>
        <dbReference type="SAM" id="MobiDB-lite"/>
    </source>
</evidence>
<keyword id="KW-0963">Cytoplasm</keyword>
<keyword id="KW-0328">Glycosyltransferase</keyword>
<keyword id="KW-0479">Metal-binding</keyword>
<keyword id="KW-1185">Reference proteome</keyword>
<keyword id="KW-0808">Transferase</keyword>
<keyword id="KW-0819">tRNA processing</keyword>
<keyword id="KW-0862">Zinc</keyword>
<proteinExistence type="evidence at transcript level"/>
<dbReference type="EC" id="2.4.2.64" evidence="1"/>
<dbReference type="EMBL" id="AE014134">
    <property type="protein sequence ID" value="AAF51396.1"/>
    <property type="molecule type" value="Genomic_DNA"/>
</dbReference>
<dbReference type="EMBL" id="AY052033">
    <property type="protein sequence ID" value="AAK93457.1"/>
    <property type="molecule type" value="mRNA"/>
</dbReference>
<dbReference type="RefSeq" id="NP_608585.1">
    <property type="nucleotide sequence ID" value="NM_134741.3"/>
</dbReference>
<dbReference type="SMR" id="Q9VPY8"/>
<dbReference type="BioGRID" id="59558">
    <property type="interactions" value="7"/>
</dbReference>
<dbReference type="FunCoup" id="Q9VPY8">
    <property type="interactions" value="1070"/>
</dbReference>
<dbReference type="IntAct" id="Q9VPY8">
    <property type="interactions" value="10"/>
</dbReference>
<dbReference type="STRING" id="7227.FBpp0077636"/>
<dbReference type="PaxDb" id="7227-FBpp0077636"/>
<dbReference type="DNASU" id="33307"/>
<dbReference type="EnsemblMetazoa" id="FBtr0077971">
    <property type="protein sequence ID" value="FBpp0077636"/>
    <property type="gene ID" value="FBgn0031321"/>
</dbReference>
<dbReference type="GeneID" id="33307"/>
<dbReference type="KEGG" id="dme:Dmel_CG4947"/>
<dbReference type="AGR" id="FB:FBgn0031321"/>
<dbReference type="CTD" id="33307"/>
<dbReference type="FlyBase" id="FBgn0031321">
    <property type="gene designation" value="Tgt"/>
</dbReference>
<dbReference type="VEuPathDB" id="VectorBase:FBgn0031321"/>
<dbReference type="eggNOG" id="KOG3908">
    <property type="taxonomic scope" value="Eukaryota"/>
</dbReference>
<dbReference type="GeneTree" id="ENSGT00530000063679"/>
<dbReference type="HOGENOM" id="CLU_022060_0_1_1"/>
<dbReference type="InParanoid" id="Q9VPY8"/>
<dbReference type="OMA" id="IDLFDCV"/>
<dbReference type="OrthoDB" id="10249838at2759"/>
<dbReference type="PhylomeDB" id="Q9VPY8"/>
<dbReference type="BioGRID-ORCS" id="33307">
    <property type="hits" value="0 hits in 1 CRISPR screen"/>
</dbReference>
<dbReference type="GenomeRNAi" id="33307"/>
<dbReference type="PRO" id="PR:Q9VPY8"/>
<dbReference type="Proteomes" id="UP000000803">
    <property type="component" value="Chromosome 2L"/>
</dbReference>
<dbReference type="Bgee" id="FBgn0031321">
    <property type="expression patterns" value="Expressed in adult enteroendocrine precursor cell in adult midgut (Drosophila) and 37 other cell types or tissues"/>
</dbReference>
<dbReference type="GO" id="GO:0032473">
    <property type="term" value="C:cytoplasmic side of mitochondrial outer membrane"/>
    <property type="evidence" value="ECO:0000250"/>
    <property type="project" value="FlyBase"/>
</dbReference>
<dbReference type="GO" id="GO:0120507">
    <property type="term" value="C:tRNA-guanine transglycosylase complex"/>
    <property type="evidence" value="ECO:0000250"/>
    <property type="project" value="FlyBase"/>
</dbReference>
<dbReference type="GO" id="GO:0046872">
    <property type="term" value="F:metal ion binding"/>
    <property type="evidence" value="ECO:0007669"/>
    <property type="project" value="UniProtKB-KW"/>
</dbReference>
<dbReference type="GO" id="GO:0008479">
    <property type="term" value="F:tRNA-guanosine(34) queuine transglycosylase activity"/>
    <property type="evidence" value="ECO:0000250"/>
    <property type="project" value="FlyBase"/>
</dbReference>
<dbReference type="GO" id="GO:0101030">
    <property type="term" value="P:tRNA-guanine transglycosylation"/>
    <property type="evidence" value="ECO:0000250"/>
    <property type="project" value="FlyBase"/>
</dbReference>
<dbReference type="FunFam" id="3.20.20.105:FF:000001">
    <property type="entry name" value="Queuine tRNA-ribosyltransferase"/>
    <property type="match status" value="1"/>
</dbReference>
<dbReference type="Gene3D" id="3.20.20.105">
    <property type="entry name" value="Queuine tRNA-ribosyltransferase-like"/>
    <property type="match status" value="1"/>
</dbReference>
<dbReference type="HAMAP" id="MF_00168">
    <property type="entry name" value="Q_tRNA_Tgt"/>
    <property type="match status" value="1"/>
</dbReference>
<dbReference type="InterPro" id="IPR004803">
    <property type="entry name" value="TGT"/>
</dbReference>
<dbReference type="InterPro" id="IPR036511">
    <property type="entry name" value="TGT-like_sf"/>
</dbReference>
<dbReference type="InterPro" id="IPR002616">
    <property type="entry name" value="tRNA_ribo_trans-like"/>
</dbReference>
<dbReference type="NCBIfam" id="TIGR00430">
    <property type="entry name" value="Q_tRNA_tgt"/>
    <property type="match status" value="1"/>
</dbReference>
<dbReference type="NCBIfam" id="TIGR00449">
    <property type="entry name" value="tgt_general"/>
    <property type="match status" value="1"/>
</dbReference>
<dbReference type="PANTHER" id="PTHR43530">
    <property type="entry name" value="QUEUINE TRNA-RIBOSYLTRANSFERASE CATALYTIC SUBUNIT 1"/>
    <property type="match status" value="1"/>
</dbReference>
<dbReference type="PANTHER" id="PTHR43530:SF1">
    <property type="entry name" value="QUEUINE TRNA-RIBOSYLTRANSFERASE CATALYTIC SUBUNIT 1"/>
    <property type="match status" value="1"/>
</dbReference>
<dbReference type="Pfam" id="PF01702">
    <property type="entry name" value="TGT"/>
    <property type="match status" value="1"/>
</dbReference>
<dbReference type="SUPFAM" id="SSF51713">
    <property type="entry name" value="tRNA-guanine transglycosylase"/>
    <property type="match status" value="1"/>
</dbReference>
<comment type="function">
    <text evidence="1">Catalytic subunit of the queuine tRNA-ribosyltransferase (TGT) that catalyzes the base-exchange of a guanine (G) residue with queuine (Q) at position 34 (anticodon wobble position) in tRNAs with GU(N) anticodons (tRNA-Asp, -Asn, -His and -Tyr), resulting in the hypermodified nucleoside queuosine (7-(((4,5-cis-dihydroxy-2-cyclopenten-1-yl)amino)methyl)-7-deazaguanosine). Catalysis occurs through a double-displacement mechanism. The nucleophile active site attacks the C1' of nucleotide 34 to detach the guanine base from the RNA, forming a covalent enzyme-RNA intermediate. The proton acceptor active site deprotonates the incoming queuine, allowing a nucleophilic attack on the C1' of the ribose to form the product.</text>
</comment>
<comment type="catalytic activity">
    <reaction evidence="1">
        <text>guanosine(34) in tRNA + queuine = queuosine(34) in tRNA + guanine</text>
        <dbReference type="Rhea" id="RHEA:16633"/>
        <dbReference type="Rhea" id="RHEA-COMP:10341"/>
        <dbReference type="Rhea" id="RHEA-COMP:18571"/>
        <dbReference type="ChEBI" id="CHEBI:16235"/>
        <dbReference type="ChEBI" id="CHEBI:17433"/>
        <dbReference type="ChEBI" id="CHEBI:74269"/>
        <dbReference type="ChEBI" id="CHEBI:194431"/>
        <dbReference type="EC" id="2.4.2.64"/>
    </reaction>
</comment>
<comment type="cofactor">
    <cofactor evidence="1">
        <name>Zn(2+)</name>
        <dbReference type="ChEBI" id="CHEBI:29105"/>
    </cofactor>
</comment>
<comment type="subunit">
    <text evidence="1">Heterodimer of a catalytic subunit and an accessory subunit.</text>
</comment>
<comment type="subcellular location">
    <subcellularLocation>
        <location evidence="1">Cytoplasm</location>
    </subcellularLocation>
</comment>
<comment type="similarity">
    <text evidence="1">Belongs to the queuine tRNA-ribosyltransferase family.</text>
</comment>
<accession>Q9VPY8</accession>
<reference key="1">
    <citation type="journal article" date="2000" name="Science">
        <title>The genome sequence of Drosophila melanogaster.</title>
        <authorList>
            <person name="Adams M.D."/>
            <person name="Celniker S.E."/>
            <person name="Holt R.A."/>
            <person name="Evans C.A."/>
            <person name="Gocayne J.D."/>
            <person name="Amanatides P.G."/>
            <person name="Scherer S.E."/>
            <person name="Li P.W."/>
            <person name="Hoskins R.A."/>
            <person name="Galle R.F."/>
            <person name="George R.A."/>
            <person name="Lewis S.E."/>
            <person name="Richards S."/>
            <person name="Ashburner M."/>
            <person name="Henderson S.N."/>
            <person name="Sutton G.G."/>
            <person name="Wortman J.R."/>
            <person name="Yandell M.D."/>
            <person name="Zhang Q."/>
            <person name="Chen L.X."/>
            <person name="Brandon R.C."/>
            <person name="Rogers Y.-H.C."/>
            <person name="Blazej R.G."/>
            <person name="Champe M."/>
            <person name="Pfeiffer B.D."/>
            <person name="Wan K.H."/>
            <person name="Doyle C."/>
            <person name="Baxter E.G."/>
            <person name="Helt G."/>
            <person name="Nelson C.R."/>
            <person name="Miklos G.L.G."/>
            <person name="Abril J.F."/>
            <person name="Agbayani A."/>
            <person name="An H.-J."/>
            <person name="Andrews-Pfannkoch C."/>
            <person name="Baldwin D."/>
            <person name="Ballew R.M."/>
            <person name="Basu A."/>
            <person name="Baxendale J."/>
            <person name="Bayraktaroglu L."/>
            <person name="Beasley E.M."/>
            <person name="Beeson K.Y."/>
            <person name="Benos P.V."/>
            <person name="Berman B.P."/>
            <person name="Bhandari D."/>
            <person name="Bolshakov S."/>
            <person name="Borkova D."/>
            <person name="Botchan M.R."/>
            <person name="Bouck J."/>
            <person name="Brokstein P."/>
            <person name="Brottier P."/>
            <person name="Burtis K.C."/>
            <person name="Busam D.A."/>
            <person name="Butler H."/>
            <person name="Cadieu E."/>
            <person name="Center A."/>
            <person name="Chandra I."/>
            <person name="Cherry J.M."/>
            <person name="Cawley S."/>
            <person name="Dahlke C."/>
            <person name="Davenport L.B."/>
            <person name="Davies P."/>
            <person name="de Pablos B."/>
            <person name="Delcher A."/>
            <person name="Deng Z."/>
            <person name="Mays A.D."/>
            <person name="Dew I."/>
            <person name="Dietz S.M."/>
            <person name="Dodson K."/>
            <person name="Doup L.E."/>
            <person name="Downes M."/>
            <person name="Dugan-Rocha S."/>
            <person name="Dunkov B.C."/>
            <person name="Dunn P."/>
            <person name="Durbin K.J."/>
            <person name="Evangelista C.C."/>
            <person name="Ferraz C."/>
            <person name="Ferriera S."/>
            <person name="Fleischmann W."/>
            <person name="Fosler C."/>
            <person name="Gabrielian A.E."/>
            <person name="Garg N.S."/>
            <person name="Gelbart W.M."/>
            <person name="Glasser K."/>
            <person name="Glodek A."/>
            <person name="Gong F."/>
            <person name="Gorrell J.H."/>
            <person name="Gu Z."/>
            <person name="Guan P."/>
            <person name="Harris M."/>
            <person name="Harris N.L."/>
            <person name="Harvey D.A."/>
            <person name="Heiman T.J."/>
            <person name="Hernandez J.R."/>
            <person name="Houck J."/>
            <person name="Hostin D."/>
            <person name="Houston K.A."/>
            <person name="Howland T.J."/>
            <person name="Wei M.-H."/>
            <person name="Ibegwam C."/>
            <person name="Jalali M."/>
            <person name="Kalush F."/>
            <person name="Karpen G.H."/>
            <person name="Ke Z."/>
            <person name="Kennison J.A."/>
            <person name="Ketchum K.A."/>
            <person name="Kimmel B.E."/>
            <person name="Kodira C.D."/>
            <person name="Kraft C.L."/>
            <person name="Kravitz S."/>
            <person name="Kulp D."/>
            <person name="Lai Z."/>
            <person name="Lasko P."/>
            <person name="Lei Y."/>
            <person name="Levitsky A.A."/>
            <person name="Li J.H."/>
            <person name="Li Z."/>
            <person name="Liang Y."/>
            <person name="Lin X."/>
            <person name="Liu X."/>
            <person name="Mattei B."/>
            <person name="McIntosh T.C."/>
            <person name="McLeod M.P."/>
            <person name="McPherson D."/>
            <person name="Merkulov G."/>
            <person name="Milshina N.V."/>
            <person name="Mobarry C."/>
            <person name="Morris J."/>
            <person name="Moshrefi A."/>
            <person name="Mount S.M."/>
            <person name="Moy M."/>
            <person name="Murphy B."/>
            <person name="Murphy L."/>
            <person name="Muzny D.M."/>
            <person name="Nelson D.L."/>
            <person name="Nelson D.R."/>
            <person name="Nelson K.A."/>
            <person name="Nixon K."/>
            <person name="Nusskern D.R."/>
            <person name="Pacleb J.M."/>
            <person name="Palazzolo M."/>
            <person name="Pittman G.S."/>
            <person name="Pan S."/>
            <person name="Pollard J."/>
            <person name="Puri V."/>
            <person name="Reese M.G."/>
            <person name="Reinert K."/>
            <person name="Remington K."/>
            <person name="Saunders R.D.C."/>
            <person name="Scheeler F."/>
            <person name="Shen H."/>
            <person name="Shue B.C."/>
            <person name="Siden-Kiamos I."/>
            <person name="Simpson M."/>
            <person name="Skupski M.P."/>
            <person name="Smith T.J."/>
            <person name="Spier E."/>
            <person name="Spradling A.C."/>
            <person name="Stapleton M."/>
            <person name="Strong R."/>
            <person name="Sun E."/>
            <person name="Svirskas R."/>
            <person name="Tector C."/>
            <person name="Turner R."/>
            <person name="Venter E."/>
            <person name="Wang A.H."/>
            <person name="Wang X."/>
            <person name="Wang Z.-Y."/>
            <person name="Wassarman D.A."/>
            <person name="Weinstock G.M."/>
            <person name="Weissenbach J."/>
            <person name="Williams S.M."/>
            <person name="Woodage T."/>
            <person name="Worley K.C."/>
            <person name="Wu D."/>
            <person name="Yang S."/>
            <person name="Yao Q.A."/>
            <person name="Ye J."/>
            <person name="Yeh R.-F."/>
            <person name="Zaveri J.S."/>
            <person name="Zhan M."/>
            <person name="Zhang G."/>
            <person name="Zhao Q."/>
            <person name="Zheng L."/>
            <person name="Zheng X.H."/>
            <person name="Zhong F.N."/>
            <person name="Zhong W."/>
            <person name="Zhou X."/>
            <person name="Zhu S.C."/>
            <person name="Zhu X."/>
            <person name="Smith H.O."/>
            <person name="Gibbs R.A."/>
            <person name="Myers E.W."/>
            <person name="Rubin G.M."/>
            <person name="Venter J.C."/>
        </authorList>
    </citation>
    <scope>NUCLEOTIDE SEQUENCE [LARGE SCALE GENOMIC DNA]</scope>
    <source>
        <strain>Berkeley</strain>
    </source>
</reference>
<reference key="2">
    <citation type="journal article" date="2002" name="Genome Biol.">
        <title>Annotation of the Drosophila melanogaster euchromatic genome: a systematic review.</title>
        <authorList>
            <person name="Misra S."/>
            <person name="Crosby M.A."/>
            <person name="Mungall C.J."/>
            <person name="Matthews B.B."/>
            <person name="Campbell K.S."/>
            <person name="Hradecky P."/>
            <person name="Huang Y."/>
            <person name="Kaminker J.S."/>
            <person name="Millburn G.H."/>
            <person name="Prochnik S.E."/>
            <person name="Smith C.D."/>
            <person name="Tupy J.L."/>
            <person name="Whitfield E.J."/>
            <person name="Bayraktaroglu L."/>
            <person name="Berman B.P."/>
            <person name="Bettencourt B.R."/>
            <person name="Celniker S.E."/>
            <person name="de Grey A.D.N.J."/>
            <person name="Drysdale R.A."/>
            <person name="Harris N.L."/>
            <person name="Richter J."/>
            <person name="Russo S."/>
            <person name="Schroeder A.J."/>
            <person name="Shu S.Q."/>
            <person name="Stapleton M."/>
            <person name="Yamada C."/>
            <person name="Ashburner M."/>
            <person name="Gelbart W.M."/>
            <person name="Rubin G.M."/>
            <person name="Lewis S.E."/>
        </authorList>
    </citation>
    <scope>GENOME REANNOTATION</scope>
    <source>
        <strain>Berkeley</strain>
    </source>
</reference>
<reference key="3">
    <citation type="journal article" date="2002" name="Genome Biol.">
        <title>A Drosophila full-length cDNA resource.</title>
        <authorList>
            <person name="Stapleton M."/>
            <person name="Carlson J.W."/>
            <person name="Brokstein P."/>
            <person name="Yu C."/>
            <person name="Champe M."/>
            <person name="George R.A."/>
            <person name="Guarin H."/>
            <person name="Kronmiller B."/>
            <person name="Pacleb J.M."/>
            <person name="Park S."/>
            <person name="Wan K.H."/>
            <person name="Rubin G.M."/>
            <person name="Celniker S.E."/>
        </authorList>
    </citation>
    <scope>NUCLEOTIDE SEQUENCE [LARGE SCALE MRNA]</scope>
    <source>
        <strain>Berkeley</strain>
        <tissue>Larva</tissue>
        <tissue>Pupae</tissue>
    </source>
</reference>
<name>TGT_DROME</name>